<protein>
    <recommendedName>
        <fullName>Guanine nucleotide-binding protein G(I)/G(S)/G(O) subunit gamma-2</fullName>
    </recommendedName>
</protein>
<dbReference type="EMBL" id="CR859030">
    <property type="protein sequence ID" value="CAH91225.1"/>
    <property type="molecule type" value="mRNA"/>
</dbReference>
<dbReference type="EMBL" id="CR860015">
    <property type="protein sequence ID" value="CAH92166.1"/>
    <property type="molecule type" value="mRNA"/>
</dbReference>
<dbReference type="RefSeq" id="NP_001125723.1">
    <property type="nucleotide sequence ID" value="NM_001132251.1"/>
</dbReference>
<dbReference type="RefSeq" id="XP_009247325.1">
    <property type="nucleotide sequence ID" value="XM_009249050.4"/>
</dbReference>
<dbReference type="RefSeq" id="XP_054385638.1">
    <property type="nucleotide sequence ID" value="XM_054529663.2"/>
</dbReference>
<dbReference type="RefSeq" id="XP_054385639.1">
    <property type="nucleotide sequence ID" value="XM_054529664.2"/>
</dbReference>
<dbReference type="RefSeq" id="XP_054385640.1">
    <property type="nucleotide sequence ID" value="XM_054529665.2"/>
</dbReference>
<dbReference type="RefSeq" id="XP_054385643.1">
    <property type="nucleotide sequence ID" value="XM_054529668.2"/>
</dbReference>
<dbReference type="RefSeq" id="XP_063571225.1">
    <property type="nucleotide sequence ID" value="XM_063715155.1"/>
</dbReference>
<dbReference type="RefSeq" id="XP_063571226.1">
    <property type="nucleotide sequence ID" value="XM_063715156.1"/>
</dbReference>
<dbReference type="RefSeq" id="XP_063571227.1">
    <property type="nucleotide sequence ID" value="XM_063715157.1"/>
</dbReference>
<dbReference type="RefSeq" id="XP_063571228.1">
    <property type="nucleotide sequence ID" value="XM_063715158.1"/>
</dbReference>
<dbReference type="RefSeq" id="XP_063571229.1">
    <property type="nucleotide sequence ID" value="XM_063715159.1"/>
</dbReference>
<dbReference type="RefSeq" id="XP_063571230.1">
    <property type="nucleotide sequence ID" value="XM_063715160.1"/>
</dbReference>
<dbReference type="RefSeq" id="XP_063571231.1">
    <property type="nucleotide sequence ID" value="XM_063715161.1"/>
</dbReference>
<dbReference type="SMR" id="Q5R7U4"/>
<dbReference type="FunCoup" id="Q5R7U4">
    <property type="interactions" value="1726"/>
</dbReference>
<dbReference type="STRING" id="9601.ENSPPYP00000006605"/>
<dbReference type="Ensembl" id="ENSPPYT00000006867.3">
    <property type="protein sequence ID" value="ENSPPYP00000006605.2"/>
    <property type="gene ID" value="ENSPPYG00000005812.3"/>
</dbReference>
<dbReference type="GeneID" id="100172647"/>
<dbReference type="KEGG" id="pon:100172647"/>
<dbReference type="CTD" id="54331"/>
<dbReference type="eggNOG" id="KOG4119">
    <property type="taxonomic scope" value="Eukaryota"/>
</dbReference>
<dbReference type="GeneTree" id="ENSGT01100000263497"/>
<dbReference type="HOGENOM" id="CLU_168377_0_1_1"/>
<dbReference type="InParanoid" id="Q5R7U4"/>
<dbReference type="OrthoDB" id="6264244at2759"/>
<dbReference type="TreeFam" id="TF319909"/>
<dbReference type="Proteomes" id="UP000001595">
    <property type="component" value="Chromosome 14"/>
</dbReference>
<dbReference type="GO" id="GO:0005834">
    <property type="term" value="C:heterotrimeric G-protein complex"/>
    <property type="evidence" value="ECO:0007669"/>
    <property type="project" value="InterPro"/>
</dbReference>
<dbReference type="GO" id="GO:0031681">
    <property type="term" value="F:G-protein beta-subunit binding"/>
    <property type="evidence" value="ECO:0000250"/>
    <property type="project" value="CAFA"/>
</dbReference>
<dbReference type="GO" id="GO:0007186">
    <property type="term" value="P:G protein-coupled receptor signaling pathway"/>
    <property type="evidence" value="ECO:0007669"/>
    <property type="project" value="InterPro"/>
</dbReference>
<dbReference type="CDD" id="cd00068">
    <property type="entry name" value="GGL"/>
    <property type="match status" value="1"/>
</dbReference>
<dbReference type="FunFam" id="4.10.260.10:FF:000001">
    <property type="entry name" value="Guanine nucleotide-binding protein subunit gamma"/>
    <property type="match status" value="1"/>
</dbReference>
<dbReference type="Gene3D" id="4.10.260.10">
    <property type="entry name" value="Transducin (heterotrimeric G protein), gamma chain"/>
    <property type="match status" value="1"/>
</dbReference>
<dbReference type="InterPro" id="IPR015898">
    <property type="entry name" value="G-protein_gamma-like_dom"/>
</dbReference>
<dbReference type="InterPro" id="IPR036284">
    <property type="entry name" value="GGL_sf"/>
</dbReference>
<dbReference type="InterPro" id="IPR001770">
    <property type="entry name" value="Gprotein-gamma"/>
</dbReference>
<dbReference type="PANTHER" id="PTHR13809">
    <property type="entry name" value="GUANINE NUCLEOTIDE-BINDING PROTEIN GAMMA SUBUNIT"/>
    <property type="match status" value="1"/>
</dbReference>
<dbReference type="Pfam" id="PF00631">
    <property type="entry name" value="G-gamma"/>
    <property type="match status" value="1"/>
</dbReference>
<dbReference type="PRINTS" id="PR00321">
    <property type="entry name" value="GPROTEING"/>
</dbReference>
<dbReference type="SMART" id="SM01224">
    <property type="entry name" value="G_gamma"/>
    <property type="match status" value="1"/>
</dbReference>
<dbReference type="SMART" id="SM00224">
    <property type="entry name" value="GGL"/>
    <property type="match status" value="1"/>
</dbReference>
<dbReference type="SUPFAM" id="SSF48670">
    <property type="entry name" value="Transducin (heterotrimeric G protein), gamma chain"/>
    <property type="match status" value="1"/>
</dbReference>
<dbReference type="PROSITE" id="PS50058">
    <property type="entry name" value="G_PROTEIN_GAMMA"/>
    <property type="match status" value="1"/>
</dbReference>
<comment type="function">
    <text evidence="1">Guanine nucleotide-binding proteins (G proteins) are involved as a modulator or transducer in various transmembrane signaling systems. The beta and gamma chains are required for the GTPase activity, for replacement of GDP by GTP, and for G protein-effector interaction (By similarity).</text>
</comment>
<comment type="subunit">
    <text evidence="2 3">G proteins are composed of 3 units, alpha, beta and gamma (By similarity). In this context, interacts with GNB2 (By similarity). The heterodimer formed by GNB1 and GNG2 interacts with ARHGEF5 (By similarity). The heterodimer formed by GNB1 and GNG2 interacts with GRK2 (By similarity). Component of the TAS2R14-GNAI1 complex, consisting of TAS2R14, GNAI1, GNB1 and GNG2 (By similarity). Forms complexes with TAS2R14 and G-proteins; these complexes play a role in the perception of bitterness (By similarity). Component of the TAS2R14-GNAT3 complex, consisting of TAS2R14, GNAT3, GNB1 and GNG2 (By similarity). Component of the TAS2R14-GNAS2 complex, consisting of TAS2R14, GNAS2, GNB1 and GNG2 (By similarity).</text>
</comment>
<comment type="subcellular location">
    <subcellularLocation>
        <location evidence="4">Cell membrane</location>
        <topology evidence="4">Lipid-anchor</topology>
        <orientation evidence="4">Cytoplasmic side</orientation>
    </subcellularLocation>
</comment>
<comment type="similarity">
    <text evidence="4">Belongs to the G protein gamma family.</text>
</comment>
<feature type="initiator methionine" description="Removed" evidence="3">
    <location>
        <position position="1"/>
    </location>
</feature>
<feature type="chain" id="PRO_0000042169" description="Guanine nucleotide-binding protein G(I)/G(S)/G(O) subunit gamma-2" evidence="3">
    <location>
        <begin position="2"/>
        <end position="68"/>
    </location>
</feature>
<feature type="propeptide" id="PRO_0000042170" description="Removed in mature form" evidence="3">
    <location>
        <begin position="69"/>
        <end position="71"/>
    </location>
</feature>
<feature type="modified residue" description="N-acetylalanine" evidence="3">
    <location>
        <position position="2"/>
    </location>
</feature>
<feature type="modified residue" description="Cysteine methyl ester" evidence="3">
    <location>
        <position position="68"/>
    </location>
</feature>
<feature type="lipid moiety-binding region" description="S-geranylgeranyl cysteine" evidence="3">
    <location>
        <position position="68"/>
    </location>
</feature>
<feature type="sequence conflict" description="In Ref. 1; CAH91225." evidence="4" ref="1">
    <original>K</original>
    <variation>E</variation>
    <location>
        <position position="46"/>
    </location>
</feature>
<organism>
    <name type="scientific">Pongo abelii</name>
    <name type="common">Sumatran orangutan</name>
    <name type="synonym">Pongo pygmaeus abelii</name>
    <dbReference type="NCBI Taxonomy" id="9601"/>
    <lineage>
        <taxon>Eukaryota</taxon>
        <taxon>Metazoa</taxon>
        <taxon>Chordata</taxon>
        <taxon>Craniata</taxon>
        <taxon>Vertebrata</taxon>
        <taxon>Euteleostomi</taxon>
        <taxon>Mammalia</taxon>
        <taxon>Eutheria</taxon>
        <taxon>Euarchontoglires</taxon>
        <taxon>Primates</taxon>
        <taxon>Haplorrhini</taxon>
        <taxon>Catarrhini</taxon>
        <taxon>Hominidae</taxon>
        <taxon>Pongo</taxon>
    </lineage>
</organism>
<sequence length="71" mass="7850">MASNNTASIAQARKLVEQLKMEANIDRIKVSKAAADLMAYCEAHAKEDPLLTPVPASENPFREKKFFCAIL</sequence>
<evidence type="ECO:0000250" key="1"/>
<evidence type="ECO:0000250" key="2">
    <source>
        <dbReference type="UniProtKB" id="P59768"/>
    </source>
</evidence>
<evidence type="ECO:0000250" key="3">
    <source>
        <dbReference type="UniProtKB" id="P63212"/>
    </source>
</evidence>
<evidence type="ECO:0000305" key="4"/>
<keyword id="KW-0007">Acetylation</keyword>
<keyword id="KW-1003">Cell membrane</keyword>
<keyword id="KW-0449">Lipoprotein</keyword>
<keyword id="KW-0472">Membrane</keyword>
<keyword id="KW-0488">Methylation</keyword>
<keyword id="KW-0636">Prenylation</keyword>
<keyword id="KW-1185">Reference proteome</keyword>
<keyword id="KW-0807">Transducer</keyword>
<accession>Q5R7U4</accession>
<accession>Q5RAI5</accession>
<proteinExistence type="inferred from homology"/>
<gene>
    <name type="primary">GNG2</name>
</gene>
<reference key="1">
    <citation type="submission" date="2004-11" db="EMBL/GenBank/DDBJ databases">
        <authorList>
            <consortium name="The German cDNA consortium"/>
        </authorList>
    </citation>
    <scope>NUCLEOTIDE SEQUENCE [LARGE SCALE MRNA]</scope>
    <source>
        <tissue>Brain cortex</tissue>
    </source>
</reference>
<name>GBG2_PONAB</name>